<organism>
    <name type="scientific">Synechococcus sp. (strain WH7803)</name>
    <dbReference type="NCBI Taxonomy" id="32051"/>
    <lineage>
        <taxon>Bacteria</taxon>
        <taxon>Bacillati</taxon>
        <taxon>Cyanobacteriota</taxon>
        <taxon>Cyanophyceae</taxon>
        <taxon>Synechococcales</taxon>
        <taxon>Synechococcaceae</taxon>
        <taxon>Synechococcus</taxon>
    </lineage>
</organism>
<comment type="function">
    <text evidence="1">RuBisCO catalyzes two reactions: the carboxylation of D-ribulose 1,5-bisphosphate, the primary event in carbon dioxide fixation, as well as the oxidative fragmentation of the pentose substrate in the photorespiration process. Both reactions occur simultaneously and in competition at the same active site. Although the small subunit is not catalytic it is essential for maximal activity.</text>
</comment>
<comment type="subunit">
    <text evidence="1">Heterohexadecamer of 8 large and 8 small subunits.</text>
</comment>
<comment type="subcellular location">
    <subcellularLocation>
        <location evidence="1">Carboxysome</location>
    </subcellularLocation>
</comment>
<comment type="induction">
    <text evidence="2">Transcribed during light cycle, reaching a peak after 6 hours of illumination, mRNA becomes undetectable during the dark. Part of the csoS1-ccbL-ccbS operon.</text>
</comment>
<comment type="miscellaneous">
    <text evidence="1">The basic functional RuBisCO is composed of a large chain homodimer in a 'head-to-tail' conformation. In form I RuBisCO this homodimer is arranged in a barrel-like tetramer with the small subunits forming a tetrameric 'cap' on each end of the 'barrel'.</text>
</comment>
<comment type="similarity">
    <text evidence="1">Belongs to the RuBisCO small chain family.</text>
</comment>
<evidence type="ECO:0000255" key="1">
    <source>
        <dbReference type="HAMAP-Rule" id="MF_00859"/>
    </source>
</evidence>
<evidence type="ECO:0000269" key="2">
    <source>
    </source>
</evidence>
<name>RBS_SYNPW</name>
<feature type="chain" id="PRO_0000198625" description="Ribulose bisphosphate carboxylase small subunit">
    <location>
        <begin position="1"/>
        <end position="113"/>
    </location>
</feature>
<proteinExistence type="evidence at transcript level"/>
<reference key="1">
    <citation type="journal article" date="1996" name="Plant Mol. Biol.">
        <title>Regulation, unique gene organization, and unusual primary structure of carbon fixation genes from a marine phycoerythrin-containing cyanobacterium.</title>
        <authorList>
            <person name="Watson G.M."/>
            <person name="Tabita F.R."/>
        </authorList>
    </citation>
    <scope>NUCLEOTIDE SEQUENCE [GENOMIC DNA]</scope>
    <scope>INDUCTION</scope>
    <source>
        <strain>WH7803</strain>
    </source>
</reference>
<reference key="2">
    <citation type="submission" date="2006-05" db="EMBL/GenBank/DDBJ databases">
        <authorList>
            <consortium name="Genoscope"/>
        </authorList>
    </citation>
    <scope>NUCLEOTIDE SEQUENCE [LARGE SCALE GENOMIC DNA]</scope>
    <source>
        <strain>WH7803</strain>
    </source>
</reference>
<keyword id="KW-1283">Bacterial microcompartment</keyword>
<keyword id="KW-0113">Calvin cycle</keyword>
<keyword id="KW-0120">Carbon dioxide fixation</keyword>
<keyword id="KW-1282">Carboxysome</keyword>
<keyword id="KW-0601">Photorespiration</keyword>
<keyword id="KW-0602">Photosynthesis</keyword>
<keyword id="KW-1185">Reference proteome</keyword>
<dbReference type="EMBL" id="U46156">
    <property type="protein sequence ID" value="AAB48081.1"/>
    <property type="molecule type" value="Genomic_DNA"/>
</dbReference>
<dbReference type="EMBL" id="CT971583">
    <property type="protein sequence ID" value="CAK23105.1"/>
    <property type="molecule type" value="Genomic_DNA"/>
</dbReference>
<dbReference type="SMR" id="P0A4S6"/>
<dbReference type="STRING" id="32051.SynWH7803_0679"/>
<dbReference type="KEGG" id="syx:SynWH7803_0679"/>
<dbReference type="eggNOG" id="COG4451">
    <property type="taxonomic scope" value="Bacteria"/>
</dbReference>
<dbReference type="HOGENOM" id="CLU_098114_2_0_3"/>
<dbReference type="OrthoDB" id="9788955at2"/>
<dbReference type="Proteomes" id="UP000001566">
    <property type="component" value="Chromosome"/>
</dbReference>
<dbReference type="GO" id="GO:0031470">
    <property type="term" value="C:carboxysome"/>
    <property type="evidence" value="ECO:0007669"/>
    <property type="project" value="UniProtKB-SubCell"/>
</dbReference>
<dbReference type="GO" id="GO:0016984">
    <property type="term" value="F:ribulose-bisphosphate carboxylase activity"/>
    <property type="evidence" value="ECO:0007669"/>
    <property type="project" value="UniProtKB-UniRule"/>
</dbReference>
<dbReference type="GO" id="GO:0009853">
    <property type="term" value="P:photorespiration"/>
    <property type="evidence" value="ECO:0007669"/>
    <property type="project" value="UniProtKB-KW"/>
</dbReference>
<dbReference type="GO" id="GO:0019253">
    <property type="term" value="P:reductive pentose-phosphate cycle"/>
    <property type="evidence" value="ECO:0007669"/>
    <property type="project" value="UniProtKB-UniRule"/>
</dbReference>
<dbReference type="CDD" id="cd03527">
    <property type="entry name" value="RuBisCO_small"/>
    <property type="match status" value="1"/>
</dbReference>
<dbReference type="Gene3D" id="3.30.190.10">
    <property type="entry name" value="Ribulose bisphosphate carboxylase, small subunit"/>
    <property type="match status" value="1"/>
</dbReference>
<dbReference type="HAMAP" id="MF_00859">
    <property type="entry name" value="RuBisCO_S_bact"/>
    <property type="match status" value="1"/>
</dbReference>
<dbReference type="InterPro" id="IPR024681">
    <property type="entry name" value="RuBisCO_ssu"/>
</dbReference>
<dbReference type="InterPro" id="IPR000894">
    <property type="entry name" value="RuBisCO_ssu_dom"/>
</dbReference>
<dbReference type="InterPro" id="IPR036385">
    <property type="entry name" value="RuBisCO_ssu_sf"/>
</dbReference>
<dbReference type="PANTHER" id="PTHR31262">
    <property type="entry name" value="RIBULOSE BISPHOSPHATE CARBOXYLASE SMALL CHAIN 1, CHLOROPLASTIC"/>
    <property type="match status" value="1"/>
</dbReference>
<dbReference type="Pfam" id="PF00101">
    <property type="entry name" value="RuBisCO_small"/>
    <property type="match status" value="1"/>
</dbReference>
<dbReference type="SMART" id="SM00961">
    <property type="entry name" value="RuBisCO_small"/>
    <property type="match status" value="1"/>
</dbReference>
<dbReference type="SUPFAM" id="SSF55239">
    <property type="entry name" value="RuBisCO, small subunit"/>
    <property type="match status" value="1"/>
</dbReference>
<protein>
    <recommendedName>
        <fullName evidence="1">Ribulose bisphosphate carboxylase small subunit</fullName>
        <shortName evidence="1">RuBisCO small subunit</shortName>
    </recommendedName>
</protein>
<gene>
    <name evidence="1" type="primary">cbbS</name>
    <name evidence="1" type="synonym">rbcS</name>
    <name type="ordered locus">SynWH7803_0679</name>
</gene>
<accession>P0A4S6</accession>
<accession>A5GJJ0</accession>
<accession>P96487</accession>
<sequence>MPFQSTVGDYQTVATLETFGFLPPMTQDEIYDQIAYIIAQGWSPLVEHVHPSNSMATYWSYWKLPFFGEKDLNVVVSELEACHRAYPDHHVRIVGYDAYTQSQGACFVVFEGR</sequence>